<reference key="1">
    <citation type="journal article" date="1984" name="J. Bacteriol.">
        <title>Gene sequence and predicted amino acid sequence of the motA protein, a membrane-associated protein required for flagellar rotation in Escherichia coli.</title>
        <authorList>
            <person name="Dean G.E."/>
            <person name="Macnab R.M."/>
            <person name="Stader J."/>
            <person name="Matsumura P."/>
            <person name="Burks C."/>
        </authorList>
    </citation>
    <scope>NUCLEOTIDE SEQUENCE [GENOMIC DNA]</scope>
</reference>
<reference key="2">
    <citation type="journal article" date="1996" name="DNA Res.">
        <title>A 460-kb DNA sequence of the Escherichia coli K-12 genome corresponding to the 40.1-50.0 min region on the linkage map.</title>
        <authorList>
            <person name="Itoh T."/>
            <person name="Aiba H."/>
            <person name="Baba T."/>
            <person name="Fujita K."/>
            <person name="Hayashi K."/>
            <person name="Inada T."/>
            <person name="Isono K."/>
            <person name="Kasai H."/>
            <person name="Kimura S."/>
            <person name="Kitakawa M."/>
            <person name="Kitagawa M."/>
            <person name="Makino K."/>
            <person name="Miki T."/>
            <person name="Mizobuchi K."/>
            <person name="Mori H."/>
            <person name="Mori T."/>
            <person name="Motomura K."/>
            <person name="Nakade S."/>
            <person name="Nakamura Y."/>
            <person name="Nashimoto H."/>
            <person name="Nishio Y."/>
            <person name="Oshima T."/>
            <person name="Saito N."/>
            <person name="Sampei G."/>
            <person name="Seki Y."/>
            <person name="Sivasundaram S."/>
            <person name="Tagami H."/>
            <person name="Takeda J."/>
            <person name="Takemoto K."/>
            <person name="Wada C."/>
            <person name="Yamamoto Y."/>
            <person name="Horiuchi T."/>
        </authorList>
    </citation>
    <scope>NUCLEOTIDE SEQUENCE [LARGE SCALE GENOMIC DNA]</scope>
    <source>
        <strain>K12 / W3110 / ATCC 27325 / DSM 5911</strain>
    </source>
</reference>
<reference key="3">
    <citation type="journal article" date="1997" name="Science">
        <title>The complete genome sequence of Escherichia coli K-12.</title>
        <authorList>
            <person name="Blattner F.R."/>
            <person name="Plunkett G. III"/>
            <person name="Bloch C.A."/>
            <person name="Perna N.T."/>
            <person name="Burland V."/>
            <person name="Riley M."/>
            <person name="Collado-Vides J."/>
            <person name="Glasner J.D."/>
            <person name="Rode C.K."/>
            <person name="Mayhew G.F."/>
            <person name="Gregor J."/>
            <person name="Davis N.W."/>
            <person name="Kirkpatrick H.A."/>
            <person name="Goeden M.A."/>
            <person name="Rose D.J."/>
            <person name="Mau B."/>
            <person name="Shao Y."/>
        </authorList>
    </citation>
    <scope>NUCLEOTIDE SEQUENCE [LARGE SCALE GENOMIC DNA]</scope>
    <source>
        <strain>K12 / MG1655 / ATCC 47076</strain>
    </source>
</reference>
<reference key="4">
    <citation type="journal article" date="2006" name="Mol. Syst. Biol.">
        <title>Highly accurate genome sequences of Escherichia coli K-12 strains MG1655 and W3110.</title>
        <authorList>
            <person name="Hayashi K."/>
            <person name="Morooka N."/>
            <person name="Yamamoto Y."/>
            <person name="Fujita K."/>
            <person name="Isono K."/>
            <person name="Choi S."/>
            <person name="Ohtsubo E."/>
            <person name="Baba T."/>
            <person name="Wanner B.L."/>
            <person name="Mori H."/>
            <person name="Horiuchi T."/>
        </authorList>
    </citation>
    <scope>NUCLEOTIDE SEQUENCE [LARGE SCALE GENOMIC DNA]</scope>
    <source>
        <strain>K12 / W3110 / ATCC 27325 / DSM 5911</strain>
    </source>
</reference>
<reference key="5">
    <citation type="journal article" date="1986" name="J. Bacteriol.">
        <title>Nucleotide sequence of the Escherichia coli motB gene and site-limited incorporation of its product into the cytoplasmic membrane.</title>
        <authorList>
            <person name="Stader J."/>
            <person name="Matsumura P."/>
            <person name="Vacante D."/>
            <person name="Dean G.E."/>
            <person name="Macnab R.M."/>
        </authorList>
    </citation>
    <scope>NUCLEOTIDE SEQUENCE [GENOMIC DNA] OF 286-295</scope>
</reference>
<reference key="6">
    <citation type="journal article" date="1991" name="J. Mol. Biol.">
        <title>Mutations in the MotA protein of Escherichia coli reveal domains critical for proton conduction.</title>
        <authorList>
            <person name="Blair D.F."/>
            <person name="Berg H.C."/>
        </authorList>
    </citation>
    <scope>MUTAGENESIS</scope>
    <scope>TOPOLOGY</scope>
</reference>
<reference key="7">
    <citation type="journal article" date="1995" name="J. Mol. Biol.">
        <title>Membrane topology of the MotA protein of Escherichia coli.</title>
        <authorList>
            <person name="Zhou J."/>
            <person name="Fazzio R.T."/>
            <person name="Blair D.F."/>
        </authorList>
    </citation>
    <scope>MUTAGENESIS</scope>
    <scope>TOPOLOGY</scope>
</reference>
<reference key="8">
    <citation type="journal article" date="2005" name="Science">
        <title>Global topology analysis of the Escherichia coli inner membrane proteome.</title>
        <authorList>
            <person name="Daley D.O."/>
            <person name="Rapp M."/>
            <person name="Granseth E."/>
            <person name="Melen K."/>
            <person name="Drew D."/>
            <person name="von Heijne G."/>
        </authorList>
    </citation>
    <scope>TOPOLOGY [LARGE SCALE ANALYSIS]</scope>
    <source>
        <strain>K12 / MG1655 / ATCC 47076</strain>
    </source>
</reference>
<reference key="9">
    <citation type="journal article" date="2010" name="Cell">
        <title>Second messenger-mediated adjustment of bacterial swimming velocity.</title>
        <authorList>
            <person name="Boehm A."/>
            <person name="Kaiser M."/>
            <person name="Li H."/>
            <person name="Spangler C."/>
            <person name="Kasper C.A."/>
            <person name="Ackermann M."/>
            <person name="Kaever V."/>
            <person name="Sourjik V."/>
            <person name="Roth V."/>
            <person name="Jenal U."/>
        </authorList>
    </citation>
    <scope>INTERACTION WITH YCGR</scope>
    <scope>MUTAGENESIS OF GLY-93 AND SER-96</scope>
    <source>
        <strain>K12 / MG1655 / ATCC 47076</strain>
    </source>
</reference>
<reference key="10">
    <citation type="journal article" date="2010" name="Mol. Cell">
        <title>The c-di-GMP binding protein YcgR controls flagellar motor direction and speed to affect chemotaxis by a 'backstop brake' mechanism.</title>
        <authorList>
            <person name="Paul K."/>
            <person name="Nieto V."/>
            <person name="Carlquist W.C."/>
            <person name="Blair D.F."/>
            <person name="Harshey R.M."/>
        </authorList>
    </citation>
    <scope>FUNCTION</scope>
    <source>
        <strain>K12 / RP3098</strain>
    </source>
</reference>
<reference key="11">
    <citation type="journal article" date="2008" name="Int. Rev. Cytol.">
        <title>Flagellar motility in bacteria structure and function of flagellar motor.</title>
        <authorList>
            <person name="Terashima H."/>
            <person name="Kojima S."/>
            <person name="Homma M."/>
        </authorList>
    </citation>
    <scope>REVIEW</scope>
</reference>
<accession>P09348</accession>
<comment type="function">
    <text evidence="3">MotA and MotB comprise the stator element of the flagellar motor complex. Required for rotation of the flagellar motor. Probable transmembrane proton channel. Overexpression of MotA, with or without MotB, restores motility in a pdeH disruption, (a c-di-GMP phosphodiesterase) suggesting there is an interaction (direct or indirect) between the c-di-GMP-binding flagellar brake protein YcgR and the flagellar stator.</text>
</comment>
<comment type="subunit">
    <text evidence="2 3">Each stator complex is composed of 4 MotA and 2 MotB subunits; in E.coli 11 to 12 stator complexes can be involved in flagellar rotation. 2 A subunits and 1 B subunit are thought to form a single ion channel, so that each stator complex contains two channels. Interacts with FliG. Interacts with flagellar brake protein YcgR in the flagellar basal bodies (PubMed:20303158). In another study (PubMed:20346719) YcgR was not seen to interact with MotA, but instead with FliM and FliG, also in the flagellar basal body.</text>
</comment>
<comment type="interaction">
    <interactant intactId="EBI-557926">
        <id>P09348</id>
    </interactant>
    <interactant intactId="EBI-1117399">
        <id>P0AF06</id>
        <label>motB</label>
    </interactant>
    <organismsDiffer>false</organismsDiffer>
    <experiments>2</experiments>
</comment>
<comment type="subcellular location">
    <subcellularLocation>
        <location>Cell inner membrane</location>
        <topology>Multi-pass membrane protein</topology>
    </subcellularLocation>
</comment>
<comment type="similarity">
    <text evidence="4">Belongs to the MotA family.</text>
</comment>
<organism>
    <name type="scientific">Escherichia coli (strain K12)</name>
    <dbReference type="NCBI Taxonomy" id="83333"/>
    <lineage>
        <taxon>Bacteria</taxon>
        <taxon>Pseudomonadati</taxon>
        <taxon>Pseudomonadota</taxon>
        <taxon>Gammaproteobacteria</taxon>
        <taxon>Enterobacterales</taxon>
        <taxon>Enterobacteriaceae</taxon>
        <taxon>Escherichia</taxon>
    </lineage>
</organism>
<name>MOTA_ECOLI</name>
<protein>
    <recommendedName>
        <fullName>Motility protein A</fullName>
    </recommendedName>
    <alternativeName>
        <fullName>Chemotaxis protein MotA</fullName>
    </alternativeName>
</protein>
<sequence length="295" mass="32011">MLILLGYLVVLGTVFGGYLMTGGSLGALYQPAELVIIAGAGIGSFIVGNNGKAIKGTLKALPLLFRRSKYTKAMYMDLLALLYRLMAKSRQMGMFSLERDIENPRESEIFASYPRILADSVMLDFIVDYLRLIISGHMNTFEIEALMDEEIETHESEAEVPANSLALVGDSLPAFGIVAAVMGVVHALGSADRPAAELGALIAHAMVGTFLGILLAYGFISPLATVLRQKSAETSKMMQCVKVTLLSNLNGYAPPIAVEFGRKTLYSSERPSFIELEEHVRAVKNPQQQTTTEEA</sequence>
<evidence type="ECO:0000255" key="1"/>
<evidence type="ECO:0000269" key="2">
    <source>
    </source>
</evidence>
<evidence type="ECO:0000269" key="3">
    <source>
    </source>
</evidence>
<evidence type="ECO:0000305" key="4"/>
<feature type="chain" id="PRO_0000189572" description="Motility protein A">
    <location>
        <begin position="1"/>
        <end position="295"/>
    </location>
</feature>
<feature type="transmembrane region" description="Helical" evidence="1">
    <location>
        <begin position="2"/>
        <end position="21"/>
    </location>
</feature>
<feature type="topological domain" description="Periplasmic" evidence="1">
    <location>
        <begin position="22"/>
        <end position="33"/>
    </location>
</feature>
<feature type="transmembrane region" description="Helical" evidence="1">
    <location>
        <begin position="34"/>
        <end position="51"/>
    </location>
</feature>
<feature type="topological domain" description="Cytoplasmic" evidence="1">
    <location>
        <begin position="52"/>
        <end position="170"/>
    </location>
</feature>
<feature type="transmembrane region" description="Helical" evidence="1">
    <location>
        <begin position="171"/>
        <end position="191"/>
    </location>
</feature>
<feature type="topological domain" description="Periplasmic" evidence="1">
    <location>
        <begin position="192"/>
        <end position="200"/>
    </location>
</feature>
<feature type="transmembrane region" description="Helical" evidence="1">
    <location>
        <begin position="201"/>
        <end position="222"/>
    </location>
</feature>
<feature type="topological domain" description="Cytoplasmic" evidence="1">
    <location>
        <begin position="223"/>
        <end position="295"/>
    </location>
</feature>
<feature type="mutagenesis site" description="Suppresses pdeH disruption motility mutant, swimming velocity is wild-type." evidence="2">
    <original>G</original>
    <variation>E</variation>
    <location>
        <position position="93"/>
    </location>
</feature>
<feature type="mutagenesis site" description="Suppresses pdeH disruption motility mutant, swimming velocity is between disruption and wild-type." evidence="2">
    <original>G</original>
    <variation>R</variation>
    <location>
        <position position="93"/>
    </location>
</feature>
<feature type="mutagenesis site" description="Suppresses pdeH disruption motility mutant, swimming velocity is between disruption and wild-type. In the wt background velocity is reduced." evidence="2">
    <original>G</original>
    <variation>V</variation>
    <location>
        <position position="93"/>
    </location>
</feature>
<feature type="mutagenesis site" description="Suppresses pdeH disruption motility mutant, swimming velocity is between disruption and wild-type. In the wt background velocity is reduced." evidence="2">
    <original>S</original>
    <variation>L</variation>
    <location>
        <position position="96"/>
    </location>
</feature>
<keyword id="KW-0997">Cell inner membrane</keyword>
<keyword id="KW-1003">Cell membrane</keyword>
<keyword id="KW-0145">Chemotaxis</keyword>
<keyword id="KW-0283">Flagellar rotation</keyword>
<keyword id="KW-0375">Hydrogen ion transport</keyword>
<keyword id="KW-0406">Ion transport</keyword>
<keyword id="KW-0472">Membrane</keyword>
<keyword id="KW-1185">Reference proteome</keyword>
<keyword id="KW-0812">Transmembrane</keyword>
<keyword id="KW-1133">Transmembrane helix</keyword>
<keyword id="KW-0813">Transport</keyword>
<proteinExistence type="evidence at protein level"/>
<gene>
    <name type="primary">motA</name>
    <name type="synonym">flaJ</name>
    <name type="ordered locus">b1890</name>
    <name type="ordered locus">JW1879</name>
</gene>
<dbReference type="EMBL" id="J01652">
    <property type="protein sequence ID" value="AAA24177.1"/>
    <property type="molecule type" value="Genomic_DNA"/>
</dbReference>
<dbReference type="EMBL" id="U00096">
    <property type="protein sequence ID" value="AAC74960.1"/>
    <property type="molecule type" value="Genomic_DNA"/>
</dbReference>
<dbReference type="EMBL" id="AP009048">
    <property type="protein sequence ID" value="BAA15711.1"/>
    <property type="molecule type" value="Genomic_DNA"/>
</dbReference>
<dbReference type="PIR" id="A30279">
    <property type="entry name" value="QRECMA"/>
</dbReference>
<dbReference type="RefSeq" id="NP_416404.1">
    <property type="nucleotide sequence ID" value="NC_000913.3"/>
</dbReference>
<dbReference type="RefSeq" id="WP_000906340.1">
    <property type="nucleotide sequence ID" value="NZ_STEB01000026.1"/>
</dbReference>
<dbReference type="SMR" id="P09348"/>
<dbReference type="BioGRID" id="4262245">
    <property type="interactions" value="487"/>
</dbReference>
<dbReference type="ComplexPortal" id="CPX-5884">
    <property type="entry name" value="Flagellar motor stator complex"/>
</dbReference>
<dbReference type="DIP" id="DIP-10244N"/>
<dbReference type="FunCoup" id="P09348">
    <property type="interactions" value="522"/>
</dbReference>
<dbReference type="IntAct" id="P09348">
    <property type="interactions" value="3"/>
</dbReference>
<dbReference type="STRING" id="511145.b1890"/>
<dbReference type="TCDB" id="1.A.30.1.1">
    <property type="family name" value="the h(+)- or na(+)-translocating bacterial flagellar motor/exbbd outer membrane transport energizer (mot/exb) superfamily"/>
</dbReference>
<dbReference type="PaxDb" id="511145-b1890"/>
<dbReference type="EnsemblBacteria" id="AAC74960">
    <property type="protein sequence ID" value="AAC74960"/>
    <property type="gene ID" value="b1890"/>
</dbReference>
<dbReference type="GeneID" id="947564"/>
<dbReference type="KEGG" id="ecj:JW1879"/>
<dbReference type="KEGG" id="eco:b1890"/>
<dbReference type="KEGG" id="ecoc:C3026_10745"/>
<dbReference type="PATRIC" id="fig|1411691.4.peg.357"/>
<dbReference type="EchoBASE" id="EB0596"/>
<dbReference type="eggNOG" id="COG1291">
    <property type="taxonomic scope" value="Bacteria"/>
</dbReference>
<dbReference type="HOGENOM" id="CLU_068213_0_0_6"/>
<dbReference type="InParanoid" id="P09348"/>
<dbReference type="OMA" id="KYTKARY"/>
<dbReference type="OrthoDB" id="9782603at2"/>
<dbReference type="PhylomeDB" id="P09348"/>
<dbReference type="BioCyc" id="EcoCyc:MOTA-FLAGELLAR-MOTOR-STATOR-PROTEIN"/>
<dbReference type="PHI-base" id="PHI:6533"/>
<dbReference type="PRO" id="PR:P09348"/>
<dbReference type="Proteomes" id="UP000000625">
    <property type="component" value="Chromosome"/>
</dbReference>
<dbReference type="GO" id="GO:0009288">
    <property type="term" value="C:bacterial-type flagellum"/>
    <property type="evidence" value="ECO:0000303"/>
    <property type="project" value="ComplexPortal"/>
</dbReference>
<dbReference type="GO" id="GO:0120101">
    <property type="term" value="C:bacterial-type flagellum stator complex"/>
    <property type="evidence" value="ECO:0000353"/>
    <property type="project" value="ComplexPortal"/>
</dbReference>
<dbReference type="GO" id="GO:0005886">
    <property type="term" value="C:plasma membrane"/>
    <property type="evidence" value="ECO:0000314"/>
    <property type="project" value="EcoCyc"/>
</dbReference>
<dbReference type="GO" id="GO:0015252">
    <property type="term" value="F:proton channel activity"/>
    <property type="evidence" value="ECO:0000304"/>
    <property type="project" value="EcoCyc"/>
</dbReference>
<dbReference type="GO" id="GO:0071973">
    <property type="term" value="P:bacterial-type flagellum-dependent cell motility"/>
    <property type="evidence" value="ECO:0000315"/>
    <property type="project" value="EcoliWiki"/>
</dbReference>
<dbReference type="GO" id="GO:0071978">
    <property type="term" value="P:bacterial-type flagellum-dependent swarming motility"/>
    <property type="evidence" value="ECO:0000318"/>
    <property type="project" value="GO_Central"/>
</dbReference>
<dbReference type="GO" id="GO:0006935">
    <property type="term" value="P:chemotaxis"/>
    <property type="evidence" value="ECO:0000303"/>
    <property type="project" value="ComplexPortal"/>
</dbReference>
<dbReference type="GO" id="GO:1902600">
    <property type="term" value="P:proton transmembrane transport"/>
    <property type="evidence" value="ECO:0000304"/>
    <property type="project" value="EcoCyc"/>
</dbReference>
<dbReference type="InterPro" id="IPR000540">
    <property type="entry name" value="Flag_MotA_CS"/>
</dbReference>
<dbReference type="InterPro" id="IPR022522">
    <property type="entry name" value="Flagellar_motor_stator_MotA"/>
</dbReference>
<dbReference type="InterPro" id="IPR047055">
    <property type="entry name" value="MotA-like"/>
</dbReference>
<dbReference type="InterPro" id="IPR002898">
    <property type="entry name" value="MotA_ExbB_proton_chnl"/>
</dbReference>
<dbReference type="InterPro" id="IPR046786">
    <property type="entry name" value="MotA_N"/>
</dbReference>
<dbReference type="NCBIfam" id="TIGR03818">
    <property type="entry name" value="MotA1"/>
    <property type="match status" value="1"/>
</dbReference>
<dbReference type="PANTHER" id="PTHR30433">
    <property type="entry name" value="CHEMOTAXIS PROTEIN MOTA"/>
    <property type="match status" value="1"/>
</dbReference>
<dbReference type="PANTHER" id="PTHR30433:SF4">
    <property type="entry name" value="MOTILITY PROTEIN A"/>
    <property type="match status" value="1"/>
</dbReference>
<dbReference type="Pfam" id="PF01618">
    <property type="entry name" value="MotA_ExbB"/>
    <property type="match status" value="1"/>
</dbReference>
<dbReference type="Pfam" id="PF20560">
    <property type="entry name" value="MotA_N"/>
    <property type="match status" value="1"/>
</dbReference>
<dbReference type="PROSITE" id="PS01307">
    <property type="entry name" value="MOTA"/>
    <property type="match status" value="1"/>
</dbReference>